<feature type="chain" id="PRO_0000217816" description="Photosystem I assembly protein Ycf3">
    <location>
        <begin position="1"/>
        <end position="168"/>
    </location>
</feature>
<feature type="repeat" description="TPR 1">
    <location>
        <begin position="35"/>
        <end position="68"/>
    </location>
</feature>
<feature type="repeat" description="TPR 2">
    <location>
        <begin position="72"/>
        <end position="105"/>
    </location>
</feature>
<feature type="repeat" description="TPR 3">
    <location>
        <begin position="120"/>
        <end position="153"/>
    </location>
</feature>
<name>YCF3_PANGI</name>
<proteinExistence type="inferred from homology"/>
<dbReference type="EMBL" id="AY582139">
    <property type="protein sequence ID" value="AAT98510.1"/>
    <property type="molecule type" value="Genomic_DNA"/>
</dbReference>
<dbReference type="RefSeq" id="YP_086967.1">
    <property type="nucleotide sequence ID" value="NC_006290.1"/>
</dbReference>
<dbReference type="SMR" id="Q68S05"/>
<dbReference type="GeneID" id="3021584"/>
<dbReference type="GO" id="GO:0009535">
    <property type="term" value="C:chloroplast thylakoid membrane"/>
    <property type="evidence" value="ECO:0007669"/>
    <property type="project" value="UniProtKB-SubCell"/>
</dbReference>
<dbReference type="GO" id="GO:0015979">
    <property type="term" value="P:photosynthesis"/>
    <property type="evidence" value="ECO:0007669"/>
    <property type="project" value="UniProtKB-UniRule"/>
</dbReference>
<dbReference type="FunFam" id="1.25.40.10:FF:000004">
    <property type="entry name" value="Photosystem I assembly protein Ycf3"/>
    <property type="match status" value="1"/>
</dbReference>
<dbReference type="Gene3D" id="1.25.40.10">
    <property type="entry name" value="Tetratricopeptide repeat domain"/>
    <property type="match status" value="1"/>
</dbReference>
<dbReference type="HAMAP" id="MF_00439">
    <property type="entry name" value="Ycf3"/>
    <property type="match status" value="1"/>
</dbReference>
<dbReference type="InterPro" id="IPR022818">
    <property type="entry name" value="PSI_Ycf3_assembly"/>
</dbReference>
<dbReference type="InterPro" id="IPR011990">
    <property type="entry name" value="TPR-like_helical_dom_sf"/>
</dbReference>
<dbReference type="InterPro" id="IPR019734">
    <property type="entry name" value="TPR_rpt"/>
</dbReference>
<dbReference type="InterPro" id="IPR051685">
    <property type="entry name" value="Ycf3/AcsC/BcsC/TPR_MFPF"/>
</dbReference>
<dbReference type="NCBIfam" id="NF002725">
    <property type="entry name" value="PRK02603.1"/>
    <property type="match status" value="1"/>
</dbReference>
<dbReference type="PANTHER" id="PTHR44943">
    <property type="entry name" value="CELLULOSE SYNTHASE OPERON PROTEIN C"/>
    <property type="match status" value="1"/>
</dbReference>
<dbReference type="PANTHER" id="PTHR44943:SF8">
    <property type="entry name" value="TPR REPEAT-CONTAINING PROTEIN MJ0263"/>
    <property type="match status" value="1"/>
</dbReference>
<dbReference type="Pfam" id="PF00515">
    <property type="entry name" value="TPR_1"/>
    <property type="match status" value="1"/>
</dbReference>
<dbReference type="SMART" id="SM00028">
    <property type="entry name" value="TPR"/>
    <property type="match status" value="3"/>
</dbReference>
<dbReference type="SUPFAM" id="SSF48452">
    <property type="entry name" value="TPR-like"/>
    <property type="match status" value="1"/>
</dbReference>
<dbReference type="PROSITE" id="PS50005">
    <property type="entry name" value="TPR"/>
    <property type="match status" value="3"/>
</dbReference>
<dbReference type="PROSITE" id="PS50293">
    <property type="entry name" value="TPR_REGION"/>
    <property type="match status" value="2"/>
</dbReference>
<organism>
    <name type="scientific">Panax ginseng</name>
    <name type="common">Korean ginseng</name>
    <dbReference type="NCBI Taxonomy" id="4054"/>
    <lineage>
        <taxon>Eukaryota</taxon>
        <taxon>Viridiplantae</taxon>
        <taxon>Streptophyta</taxon>
        <taxon>Embryophyta</taxon>
        <taxon>Tracheophyta</taxon>
        <taxon>Spermatophyta</taxon>
        <taxon>Magnoliopsida</taxon>
        <taxon>eudicotyledons</taxon>
        <taxon>Gunneridae</taxon>
        <taxon>Pentapetalae</taxon>
        <taxon>asterids</taxon>
        <taxon>campanulids</taxon>
        <taxon>Apiales</taxon>
        <taxon>Araliaceae</taxon>
        <taxon>Panax</taxon>
    </lineage>
</organism>
<evidence type="ECO:0000255" key="1">
    <source>
        <dbReference type="HAMAP-Rule" id="MF_00439"/>
    </source>
</evidence>
<sequence>MPRSRINGNFIDKTFSIVANILLRIIPTTSGEKEAFTYYRDGMSAQSEGNYAEALQNYYEAMRLEIDPYDRSYILYNIGLIHTSNGEHTKALEYYFRALERNPFLPQAFNNMAVICHYRGEQAIRQGDSEIAEAWFDQAAEYWKQAMALTPGNYIEAHNWLKITRRFE</sequence>
<comment type="function">
    <text evidence="1">Essential for the assembly of the photosystem I (PSI) complex. May act as a chaperone-like factor to guide the assembly of the PSI subunits.</text>
</comment>
<comment type="subcellular location">
    <subcellularLocation>
        <location evidence="1">Plastid</location>
        <location evidence="1">Chloroplast thylakoid membrane</location>
        <topology evidence="1">Peripheral membrane protein</topology>
    </subcellularLocation>
</comment>
<comment type="similarity">
    <text evidence="1">Belongs to the Ycf3 family.</text>
</comment>
<keyword id="KW-0150">Chloroplast</keyword>
<keyword id="KW-0472">Membrane</keyword>
<keyword id="KW-0602">Photosynthesis</keyword>
<keyword id="KW-0934">Plastid</keyword>
<keyword id="KW-0677">Repeat</keyword>
<keyword id="KW-0793">Thylakoid</keyword>
<keyword id="KW-0802">TPR repeat</keyword>
<accession>Q68S05</accession>
<gene>
    <name evidence="1" type="primary">ycf3</name>
    <name type="ORF">PSC0445</name>
</gene>
<protein>
    <recommendedName>
        <fullName evidence="1">Photosystem I assembly protein Ycf3</fullName>
    </recommendedName>
</protein>
<reference key="1">
    <citation type="journal article" date="2004" name="DNA Res.">
        <title>Complete chloroplast genome sequence from Korea ginseng (Panax schinseng Nees) and comparative analysis of sequence evolution among 17 vascular plants.</title>
        <authorList>
            <person name="Kim K.-J."/>
            <person name="Lee H.-L."/>
        </authorList>
    </citation>
    <scope>NUCLEOTIDE SEQUENCE [LARGE SCALE GENOMIC DNA]</scope>
</reference>
<geneLocation type="chloroplast"/>